<gene>
    <name evidence="1" type="primary">uvrC</name>
    <name type="ordered locus">PD_1325</name>
</gene>
<reference key="1">
    <citation type="journal article" date="2003" name="J. Bacteriol.">
        <title>Comparative analyses of the complete genome sequences of Pierce's disease and citrus variegated chlorosis strains of Xylella fastidiosa.</title>
        <authorList>
            <person name="Van Sluys M.A."/>
            <person name="de Oliveira M.C."/>
            <person name="Monteiro-Vitorello C.B."/>
            <person name="Miyaki C.Y."/>
            <person name="Furlan L.R."/>
            <person name="Camargo L.E.A."/>
            <person name="da Silva A.C.R."/>
            <person name="Moon D.H."/>
            <person name="Takita M.A."/>
            <person name="Lemos E.G.M."/>
            <person name="Machado M.A."/>
            <person name="Ferro M.I.T."/>
            <person name="da Silva F.R."/>
            <person name="Goldman M.H.S."/>
            <person name="Goldman G.H."/>
            <person name="Lemos M.V.F."/>
            <person name="El-Dorry H."/>
            <person name="Tsai S.M."/>
            <person name="Carrer H."/>
            <person name="Carraro D.M."/>
            <person name="de Oliveira R.C."/>
            <person name="Nunes L.R."/>
            <person name="Siqueira W.J."/>
            <person name="Coutinho L.L."/>
            <person name="Kimura E.T."/>
            <person name="Ferro E.S."/>
            <person name="Harakava R."/>
            <person name="Kuramae E.E."/>
            <person name="Marino C.L."/>
            <person name="Giglioti E."/>
            <person name="Abreu I.L."/>
            <person name="Alves L.M.C."/>
            <person name="do Amaral A.M."/>
            <person name="Baia G.S."/>
            <person name="Blanco S.R."/>
            <person name="Brito M.S."/>
            <person name="Cannavan F.S."/>
            <person name="Celestino A.V."/>
            <person name="da Cunha A.F."/>
            <person name="Fenille R.C."/>
            <person name="Ferro J.A."/>
            <person name="Formighieri E.F."/>
            <person name="Kishi L.T."/>
            <person name="Leoni S.G."/>
            <person name="Oliveira A.R."/>
            <person name="Rosa V.E. Jr."/>
            <person name="Sassaki F.T."/>
            <person name="Sena J.A.D."/>
            <person name="de Souza A.A."/>
            <person name="Truffi D."/>
            <person name="Tsukumo F."/>
            <person name="Yanai G.M."/>
            <person name="Zaros L.G."/>
            <person name="Civerolo E.L."/>
            <person name="Simpson A.J.G."/>
            <person name="Almeida N.F. Jr."/>
            <person name="Setubal J.C."/>
            <person name="Kitajima J.P."/>
        </authorList>
    </citation>
    <scope>NUCLEOTIDE SEQUENCE [LARGE SCALE GENOMIC DNA]</scope>
    <source>
        <strain>Temecula1 / ATCC 700964</strain>
    </source>
</reference>
<evidence type="ECO:0000255" key="1">
    <source>
        <dbReference type="HAMAP-Rule" id="MF_00203"/>
    </source>
</evidence>
<keyword id="KW-0963">Cytoplasm</keyword>
<keyword id="KW-0227">DNA damage</keyword>
<keyword id="KW-0228">DNA excision</keyword>
<keyword id="KW-0234">DNA repair</keyword>
<keyword id="KW-0267">Excision nuclease</keyword>
<keyword id="KW-1185">Reference proteome</keyword>
<keyword id="KW-0742">SOS response</keyword>
<name>UVRC_XYLFT</name>
<feature type="chain" id="PRO_0000138363" description="UvrABC system protein C">
    <location>
        <begin position="1"/>
        <end position="621"/>
    </location>
</feature>
<feature type="domain" description="GIY-YIG" evidence="1">
    <location>
        <begin position="20"/>
        <end position="98"/>
    </location>
</feature>
<feature type="domain" description="UVR" evidence="1">
    <location>
        <begin position="207"/>
        <end position="242"/>
    </location>
</feature>
<sequence length="621" mass="68929">MTDNAPITFDGKRFAAHLSTAPGVYRMYAADDTLLYVGKAGALRKRVASYFNGTPKNTRLTAMLAQVVRMDVTITRNEAEALLLENQLIKSLTPRYNVLLRDDKSYPYVLLTREAWPRIALHRGPQIVPGRYFGPYPGMTAVRDMLNLIHKLFKLRSCEDSVFRNRSRPCLQYQIGRCSAPCVNVVTHDNYTEAVHRVTLFLEGKSDLLAEELIQAMQVASEHLEFEQAARLRDLLTSLRSMQNRQYVDGRAADLDVLACAALSGHACVLLLSFRDGRNLGTRMFFPKTNGEERTAEILSAFVSQYYAEYPPPPEILLDQEIPDHTLLEAAFSRSSAHKISLRWNVRGERAGYVELAVRNAQVALSTELTSQRAQRVRSEAVRQLLGLEGPIKRVECFDISHTMGEATVASCVVFDAVGPVRSQYRRYNITGITPGDDYAAMRQAIERRFRRAVEEDKQGERPDVLFIDGGAGQLAQAKMALNAVGVESVLLVGVSKGEERRAGHETLIMLDGQELHPGAASPALQFIQQVRDEAHRFAITGHRARRQKTRMTSKLEDIPGIGSRRRANLLKHFGGLAGVKAAGQTEIARVEGISTALAAKIYASLHGLSKNDAANASRVS</sequence>
<proteinExistence type="inferred from homology"/>
<accession>Q87BX2</accession>
<dbReference type="EMBL" id="AE009442">
    <property type="protein sequence ID" value="AAO29173.1"/>
    <property type="molecule type" value="Genomic_DNA"/>
</dbReference>
<dbReference type="RefSeq" id="WP_011098050.1">
    <property type="nucleotide sequence ID" value="NC_004556.1"/>
</dbReference>
<dbReference type="SMR" id="Q87BX2"/>
<dbReference type="KEGG" id="xft:PD_1325"/>
<dbReference type="HOGENOM" id="CLU_014841_3_0_6"/>
<dbReference type="Proteomes" id="UP000002516">
    <property type="component" value="Chromosome"/>
</dbReference>
<dbReference type="GO" id="GO:0005737">
    <property type="term" value="C:cytoplasm"/>
    <property type="evidence" value="ECO:0007669"/>
    <property type="project" value="UniProtKB-SubCell"/>
</dbReference>
<dbReference type="GO" id="GO:0009380">
    <property type="term" value="C:excinuclease repair complex"/>
    <property type="evidence" value="ECO:0007669"/>
    <property type="project" value="InterPro"/>
</dbReference>
<dbReference type="GO" id="GO:0003677">
    <property type="term" value="F:DNA binding"/>
    <property type="evidence" value="ECO:0007669"/>
    <property type="project" value="UniProtKB-UniRule"/>
</dbReference>
<dbReference type="GO" id="GO:0009381">
    <property type="term" value="F:excinuclease ABC activity"/>
    <property type="evidence" value="ECO:0007669"/>
    <property type="project" value="UniProtKB-UniRule"/>
</dbReference>
<dbReference type="GO" id="GO:0006289">
    <property type="term" value="P:nucleotide-excision repair"/>
    <property type="evidence" value="ECO:0007669"/>
    <property type="project" value="UniProtKB-UniRule"/>
</dbReference>
<dbReference type="GO" id="GO:0009432">
    <property type="term" value="P:SOS response"/>
    <property type="evidence" value="ECO:0007669"/>
    <property type="project" value="UniProtKB-UniRule"/>
</dbReference>
<dbReference type="CDD" id="cd10434">
    <property type="entry name" value="GIY-YIG_UvrC_Cho"/>
    <property type="match status" value="1"/>
</dbReference>
<dbReference type="FunFam" id="1.10.150.20:FF:000005">
    <property type="entry name" value="UvrABC system protein C"/>
    <property type="match status" value="1"/>
</dbReference>
<dbReference type="FunFam" id="3.30.420.340:FF:000001">
    <property type="entry name" value="UvrABC system protein C"/>
    <property type="match status" value="1"/>
</dbReference>
<dbReference type="FunFam" id="3.40.1440.10:FF:000001">
    <property type="entry name" value="UvrABC system protein C"/>
    <property type="match status" value="1"/>
</dbReference>
<dbReference type="Gene3D" id="1.10.150.20">
    <property type="entry name" value="5' to 3' exonuclease, C-terminal subdomain"/>
    <property type="match status" value="1"/>
</dbReference>
<dbReference type="Gene3D" id="3.40.1440.10">
    <property type="entry name" value="GIY-YIG endonuclease"/>
    <property type="match status" value="1"/>
</dbReference>
<dbReference type="Gene3D" id="4.10.860.10">
    <property type="entry name" value="UVR domain"/>
    <property type="match status" value="1"/>
</dbReference>
<dbReference type="Gene3D" id="3.30.420.340">
    <property type="entry name" value="UvrC, RNAse H endonuclease domain"/>
    <property type="match status" value="1"/>
</dbReference>
<dbReference type="HAMAP" id="MF_00203">
    <property type="entry name" value="UvrC"/>
    <property type="match status" value="1"/>
</dbReference>
<dbReference type="InterPro" id="IPR000305">
    <property type="entry name" value="GIY-YIG_endonuc"/>
</dbReference>
<dbReference type="InterPro" id="IPR035901">
    <property type="entry name" value="GIY-YIG_endonuc_sf"/>
</dbReference>
<dbReference type="InterPro" id="IPR047296">
    <property type="entry name" value="GIY-YIG_UvrC_Cho"/>
</dbReference>
<dbReference type="InterPro" id="IPR003583">
    <property type="entry name" value="Hlx-hairpin-Hlx_DNA-bd_motif"/>
</dbReference>
<dbReference type="InterPro" id="IPR010994">
    <property type="entry name" value="RuvA_2-like"/>
</dbReference>
<dbReference type="InterPro" id="IPR001943">
    <property type="entry name" value="UVR_dom"/>
</dbReference>
<dbReference type="InterPro" id="IPR036876">
    <property type="entry name" value="UVR_dom_sf"/>
</dbReference>
<dbReference type="InterPro" id="IPR050066">
    <property type="entry name" value="UvrABC_protein_C"/>
</dbReference>
<dbReference type="InterPro" id="IPR004791">
    <property type="entry name" value="UvrC"/>
</dbReference>
<dbReference type="InterPro" id="IPR001162">
    <property type="entry name" value="UvrC_RNase_H_dom"/>
</dbReference>
<dbReference type="InterPro" id="IPR038476">
    <property type="entry name" value="UvrC_RNase_H_dom_sf"/>
</dbReference>
<dbReference type="NCBIfam" id="TIGR00194">
    <property type="entry name" value="uvrC"/>
    <property type="match status" value="1"/>
</dbReference>
<dbReference type="PANTHER" id="PTHR30562:SF1">
    <property type="entry name" value="UVRABC SYSTEM PROTEIN C"/>
    <property type="match status" value="1"/>
</dbReference>
<dbReference type="PANTHER" id="PTHR30562">
    <property type="entry name" value="UVRC/OXIDOREDUCTASE"/>
    <property type="match status" value="1"/>
</dbReference>
<dbReference type="Pfam" id="PF01541">
    <property type="entry name" value="GIY-YIG"/>
    <property type="match status" value="1"/>
</dbReference>
<dbReference type="Pfam" id="PF14520">
    <property type="entry name" value="HHH_5"/>
    <property type="match status" value="1"/>
</dbReference>
<dbReference type="Pfam" id="PF02151">
    <property type="entry name" value="UVR"/>
    <property type="match status" value="1"/>
</dbReference>
<dbReference type="Pfam" id="PF22920">
    <property type="entry name" value="UvrC_RNaseH"/>
    <property type="match status" value="1"/>
</dbReference>
<dbReference type="Pfam" id="PF08459">
    <property type="entry name" value="UvrC_RNaseH_dom"/>
    <property type="match status" value="1"/>
</dbReference>
<dbReference type="SMART" id="SM00465">
    <property type="entry name" value="GIYc"/>
    <property type="match status" value="1"/>
</dbReference>
<dbReference type="SMART" id="SM00278">
    <property type="entry name" value="HhH1"/>
    <property type="match status" value="2"/>
</dbReference>
<dbReference type="SUPFAM" id="SSF46600">
    <property type="entry name" value="C-terminal UvrC-binding domain of UvrB"/>
    <property type="match status" value="1"/>
</dbReference>
<dbReference type="SUPFAM" id="SSF82771">
    <property type="entry name" value="GIY-YIG endonuclease"/>
    <property type="match status" value="1"/>
</dbReference>
<dbReference type="SUPFAM" id="SSF47781">
    <property type="entry name" value="RuvA domain 2-like"/>
    <property type="match status" value="1"/>
</dbReference>
<dbReference type="PROSITE" id="PS50164">
    <property type="entry name" value="GIY_YIG"/>
    <property type="match status" value="1"/>
</dbReference>
<dbReference type="PROSITE" id="PS50151">
    <property type="entry name" value="UVR"/>
    <property type="match status" value="1"/>
</dbReference>
<dbReference type="PROSITE" id="PS50165">
    <property type="entry name" value="UVRC"/>
    <property type="match status" value="1"/>
</dbReference>
<protein>
    <recommendedName>
        <fullName evidence="1">UvrABC system protein C</fullName>
        <shortName evidence="1">Protein UvrC</shortName>
    </recommendedName>
    <alternativeName>
        <fullName evidence="1">Excinuclease ABC subunit C</fullName>
    </alternativeName>
</protein>
<comment type="function">
    <text evidence="1">The UvrABC repair system catalyzes the recognition and processing of DNA lesions. UvrC both incises the 5' and 3' sides of the lesion. The N-terminal half is responsible for the 3' incision and the C-terminal half is responsible for the 5' incision.</text>
</comment>
<comment type="subunit">
    <text evidence="1">Interacts with UvrB in an incision complex.</text>
</comment>
<comment type="subcellular location">
    <subcellularLocation>
        <location evidence="1">Cytoplasm</location>
    </subcellularLocation>
</comment>
<comment type="similarity">
    <text evidence="1">Belongs to the UvrC family.</text>
</comment>
<organism>
    <name type="scientific">Xylella fastidiosa (strain Temecula1 / ATCC 700964)</name>
    <dbReference type="NCBI Taxonomy" id="183190"/>
    <lineage>
        <taxon>Bacteria</taxon>
        <taxon>Pseudomonadati</taxon>
        <taxon>Pseudomonadota</taxon>
        <taxon>Gammaproteobacteria</taxon>
        <taxon>Lysobacterales</taxon>
        <taxon>Lysobacteraceae</taxon>
        <taxon>Xylella</taxon>
    </lineage>
</organism>